<name>COP1_MOUSE</name>
<keyword id="KW-0175">Coiled coil</keyword>
<keyword id="KW-0963">Cytoplasm</keyword>
<keyword id="KW-0479">Metal-binding</keyword>
<keyword id="KW-0539">Nucleus</keyword>
<keyword id="KW-1185">Reference proteome</keyword>
<keyword id="KW-0677">Repeat</keyword>
<keyword id="KW-0808">Transferase</keyword>
<keyword id="KW-0833">Ubl conjugation pathway</keyword>
<keyword id="KW-0853">WD repeat</keyword>
<keyword id="KW-0862">Zinc</keyword>
<keyword id="KW-0863">Zinc-finger</keyword>
<sequence length="733" mass="80441">MSGSRQAGSGSAGTSPGSSAASSVTSASSSLSSSPSPPSVAASAATLVSGGVAPAAGSGGLGGPGRPVLVAAAVSGSASAGGAVSAGQSRLSCAARPSAGVGGSSSSLGSSSRKRPLLVPLCNGLLNSYEDKSNDFVCPICFDMIEEAYMTKCGHSFCYKCIHQSLEDNNRCPKCNYVVDNIDHLYPNFLVNELILKQKQRFEEKRFKLDHSVSSTNGHRWQIFQDLLGTDQDNLDLANVNLMLELLVQKKKQLEAESHAAQLQILMEFLKVARRNKREQLEQIQKELSVLEEDIKRVEEMSGLYSPVSEDSTVPQFEAPSPSHSSIIDSTEYSQPPGFSGTSQTKKQPWYNSTLASRRKRLTAHFEDLEQCYFSTRMSRISDDSRTASQLDEFQECLSKFTRYNSVRPLATLSYASDLYNGSSIVSSIEFDRDCDYFAIAGVTKKIKVYEYGTVIQDAVDIHYPENEMTCNSKISCISWSSYHKNLLASSDYEGTVILWDGFTGQRSKVYQEHEKRCWSVDFNLMDPKLLASGSDDAKVKLWSTNLDNSVASIEAKANVCCVKFSPSSRYHLAFGCADHCVHYYDLRNTKQPIMVFKGHRKAVSYAKFVSGEEIVSASTDSQLKLWNVGKPYCLRSFKGHINEKNFVGLASNGDYIACGSENNSLYLYYKGLSKTLLTFKFDTVKSVLDKDRKEDDTNEFVSAVCWRALSDGESNVLIAANSQGTIKVLELV</sequence>
<feature type="chain" id="PRO_0000055880" description="E3 ubiquitin-protein ligase COP1">
    <location>
        <begin position="1"/>
        <end position="733"/>
    </location>
</feature>
<feature type="repeat" description="WD 1">
    <location>
        <begin position="421"/>
        <end position="460"/>
    </location>
</feature>
<feature type="repeat" description="WD 2">
    <location>
        <begin position="470"/>
        <end position="510"/>
    </location>
</feature>
<feature type="repeat" description="WD 3">
    <location>
        <begin position="513"/>
        <end position="553"/>
    </location>
</feature>
<feature type="repeat" description="WD 4">
    <location>
        <begin position="555"/>
        <end position="595"/>
    </location>
</feature>
<feature type="repeat" description="WD 5">
    <location>
        <begin position="599"/>
        <end position="637"/>
    </location>
</feature>
<feature type="repeat" description="WD 6">
    <location>
        <begin position="640"/>
        <end position="679"/>
    </location>
</feature>
<feature type="repeat" description="WD 7">
    <location>
        <begin position="695"/>
        <end position="731"/>
    </location>
</feature>
<feature type="zinc finger region" description="RING-type" evidence="3">
    <location>
        <begin position="138"/>
        <end position="176"/>
    </location>
</feature>
<feature type="region of interest" description="Disordered" evidence="4">
    <location>
        <begin position="1"/>
        <end position="43"/>
    </location>
</feature>
<feature type="region of interest" description="Disordered" evidence="4">
    <location>
        <begin position="307"/>
        <end position="327"/>
    </location>
</feature>
<feature type="region of interest" description="Interaction with TRIB1" evidence="1">
    <location>
        <begin position="645"/>
        <end position="647"/>
    </location>
</feature>
<feature type="coiled-coil region" evidence="2">
    <location>
        <begin position="231"/>
        <end position="306"/>
    </location>
</feature>
<feature type="short sequence motif" description="Nuclear localization signal 1">
    <location>
        <begin position="111"/>
        <end position="115"/>
    </location>
</feature>
<feature type="short sequence motif" description="Nuclear localization signal 2">
    <location>
        <begin position="197"/>
        <end position="208"/>
    </location>
</feature>
<feature type="short sequence motif" description="Nuclear export signal">
    <location>
        <begin position="237"/>
        <end position="247"/>
    </location>
</feature>
<feature type="site" description="Interaction with TRIB1" evidence="1">
    <location>
        <position position="474"/>
    </location>
</feature>
<feature type="site" description="Interaction with TRIB1" evidence="1">
    <location>
        <position position="493"/>
    </location>
</feature>
<feature type="mutagenesis site" description="Abolishes nuclear localization." evidence="5">
    <original>RK</original>
    <variation>SN</variation>
    <location>
        <begin position="113"/>
        <end position="114"/>
    </location>
</feature>
<feature type="mutagenesis site" description="Does not affect the subcellular localization." evidence="5">
    <original>KQKQR</original>
    <variation>NQNQS</variation>
    <location>
        <begin position="197"/>
        <end position="201"/>
    </location>
</feature>
<feature type="mutagenesis site" description="Abolishes nuclear localization." evidence="5">
    <original>KRFK</original>
    <variation>TSFT</variation>
    <location>
        <begin position="205"/>
        <end position="208"/>
    </location>
</feature>
<feature type="mutagenesis site" description="Abolishes nuclear export." evidence="5">
    <original>LEL</original>
    <variation>AEA</variation>
    <location>
        <begin position="244"/>
        <end position="246"/>
    </location>
</feature>
<feature type="mutagenesis site" description="Abolishes the nuclear speckle localization but not the nuclear localization." evidence="5">
    <original>RRK</original>
    <variation>SRT</variation>
    <location>
        <begin position="358"/>
        <end position="360"/>
    </location>
</feature>
<organism>
    <name type="scientific">Mus musculus</name>
    <name type="common">Mouse</name>
    <dbReference type="NCBI Taxonomy" id="10090"/>
    <lineage>
        <taxon>Eukaryota</taxon>
        <taxon>Metazoa</taxon>
        <taxon>Chordata</taxon>
        <taxon>Craniata</taxon>
        <taxon>Vertebrata</taxon>
        <taxon>Euteleostomi</taxon>
        <taxon>Mammalia</taxon>
        <taxon>Eutheria</taxon>
        <taxon>Euarchontoglires</taxon>
        <taxon>Glires</taxon>
        <taxon>Rodentia</taxon>
        <taxon>Myomorpha</taxon>
        <taxon>Muroidea</taxon>
        <taxon>Muridae</taxon>
        <taxon>Murinae</taxon>
        <taxon>Mus</taxon>
        <taxon>Mus</taxon>
    </lineage>
</organism>
<dbReference type="EC" id="2.3.2.27" evidence="1"/>
<dbReference type="EMBL" id="AF151110">
    <property type="protein sequence ID" value="AAD51094.2"/>
    <property type="molecule type" value="mRNA"/>
</dbReference>
<dbReference type="EMBL" id="BC082804">
    <property type="protein sequence ID" value="AAH82804.1"/>
    <property type="molecule type" value="mRNA"/>
</dbReference>
<dbReference type="CCDS" id="CCDS35745.1"/>
<dbReference type="RefSeq" id="NP_036061.1">
    <property type="nucleotide sequence ID" value="NM_011931.5"/>
</dbReference>
<dbReference type="SMR" id="Q9R1A8"/>
<dbReference type="BioGRID" id="204934">
    <property type="interactions" value="15"/>
</dbReference>
<dbReference type="DIP" id="DIP-60522N"/>
<dbReference type="FunCoup" id="Q9R1A8">
    <property type="interactions" value="2171"/>
</dbReference>
<dbReference type="IntAct" id="Q9R1A8">
    <property type="interactions" value="1"/>
</dbReference>
<dbReference type="STRING" id="10090.ENSMUSP00000076160"/>
<dbReference type="iPTMnet" id="Q9R1A8"/>
<dbReference type="PhosphoSitePlus" id="Q9R1A8"/>
<dbReference type="PaxDb" id="10090-ENSMUSP00000076160"/>
<dbReference type="ProteomicsDB" id="255186"/>
<dbReference type="Pumba" id="Q9R1A8"/>
<dbReference type="Antibodypedia" id="34406">
    <property type="antibodies" value="246 antibodies from 30 providers"/>
</dbReference>
<dbReference type="DNASU" id="26374"/>
<dbReference type="Ensembl" id="ENSMUST00000076894.11">
    <property type="protein sequence ID" value="ENSMUSP00000076160.6"/>
    <property type="gene ID" value="ENSMUSG00000040782.13"/>
</dbReference>
<dbReference type="GeneID" id="26374"/>
<dbReference type="KEGG" id="mmu:26374"/>
<dbReference type="UCSC" id="uc007ddz.1">
    <property type="organism name" value="mouse"/>
</dbReference>
<dbReference type="AGR" id="MGI:1347046"/>
<dbReference type="CTD" id="64326"/>
<dbReference type="MGI" id="MGI:1347046">
    <property type="gene designation" value="Cop1"/>
</dbReference>
<dbReference type="VEuPathDB" id="HostDB:ENSMUSG00000040782"/>
<dbReference type="eggNOG" id="ENOG502QQ8V">
    <property type="taxonomic scope" value="Eukaryota"/>
</dbReference>
<dbReference type="GeneTree" id="ENSGT00920000149161"/>
<dbReference type="HOGENOM" id="CLU_006994_2_1_1"/>
<dbReference type="InParanoid" id="Q9R1A8"/>
<dbReference type="OMA" id="CWRQMSN"/>
<dbReference type="OrthoDB" id="273771at2759"/>
<dbReference type="PhylomeDB" id="Q9R1A8"/>
<dbReference type="TreeFam" id="TF328912"/>
<dbReference type="Reactome" id="R-MMU-349425">
    <property type="pathway name" value="Autodegradation of the E3 ubiquitin ligase COP1"/>
</dbReference>
<dbReference type="Reactome" id="R-MMU-8951664">
    <property type="pathway name" value="Neddylation"/>
</dbReference>
<dbReference type="UniPathway" id="UPA00143"/>
<dbReference type="BioGRID-ORCS" id="26374">
    <property type="hits" value="17 hits in 86 CRISPR screens"/>
</dbReference>
<dbReference type="ChiTaRS" id="Rfwd2">
    <property type="organism name" value="mouse"/>
</dbReference>
<dbReference type="PRO" id="PR:Q9R1A8"/>
<dbReference type="Proteomes" id="UP000000589">
    <property type="component" value="Chromosome 1"/>
</dbReference>
<dbReference type="RNAct" id="Q9R1A8">
    <property type="molecule type" value="protein"/>
</dbReference>
<dbReference type="Bgee" id="ENSMUSG00000040782">
    <property type="expression patterns" value="Expressed in animal zygote and 223 other cell types or tissues"/>
</dbReference>
<dbReference type="ExpressionAtlas" id="Q9R1A8">
    <property type="expression patterns" value="baseline and differential"/>
</dbReference>
<dbReference type="GO" id="GO:0031464">
    <property type="term" value="C:Cul4A-RING E3 ubiquitin ligase complex"/>
    <property type="evidence" value="ECO:0007669"/>
    <property type="project" value="Ensembl"/>
</dbReference>
<dbReference type="GO" id="GO:0000139">
    <property type="term" value="C:Golgi membrane"/>
    <property type="evidence" value="ECO:0007669"/>
    <property type="project" value="Ensembl"/>
</dbReference>
<dbReference type="GO" id="GO:0016607">
    <property type="term" value="C:nuclear speck"/>
    <property type="evidence" value="ECO:0007669"/>
    <property type="project" value="UniProtKB-SubCell"/>
</dbReference>
<dbReference type="GO" id="GO:0061630">
    <property type="term" value="F:ubiquitin protein ligase activity"/>
    <property type="evidence" value="ECO:0007669"/>
    <property type="project" value="Ensembl"/>
</dbReference>
<dbReference type="GO" id="GO:0008270">
    <property type="term" value="F:zinc ion binding"/>
    <property type="evidence" value="ECO:0007669"/>
    <property type="project" value="UniProtKB-KW"/>
</dbReference>
<dbReference type="GO" id="GO:0032436">
    <property type="term" value="P:positive regulation of proteasomal ubiquitin-dependent protein catabolic process"/>
    <property type="evidence" value="ECO:0007669"/>
    <property type="project" value="Ensembl"/>
</dbReference>
<dbReference type="GO" id="GO:0043161">
    <property type="term" value="P:proteasome-mediated ubiquitin-dependent protein catabolic process"/>
    <property type="evidence" value="ECO:0007669"/>
    <property type="project" value="Ensembl"/>
</dbReference>
<dbReference type="GO" id="GO:0016567">
    <property type="term" value="P:protein ubiquitination"/>
    <property type="evidence" value="ECO:0007669"/>
    <property type="project" value="UniProtKB-UniPathway"/>
</dbReference>
<dbReference type="GO" id="GO:0010212">
    <property type="term" value="P:response to ionizing radiation"/>
    <property type="evidence" value="ECO:0007669"/>
    <property type="project" value="Ensembl"/>
</dbReference>
<dbReference type="CDD" id="cd16504">
    <property type="entry name" value="RING-HC_COP1"/>
    <property type="match status" value="1"/>
</dbReference>
<dbReference type="CDD" id="cd00200">
    <property type="entry name" value="WD40"/>
    <property type="match status" value="1"/>
</dbReference>
<dbReference type="FunFam" id="3.30.40.10:FF:000222">
    <property type="entry name" value="E3 ubiquitin-protein ligase COP1 isoform X2"/>
    <property type="match status" value="1"/>
</dbReference>
<dbReference type="FunFam" id="2.130.10.10:FF:000090">
    <property type="entry name" value="E3 ubiquitin-protein ligase RFWD2 isoform X1"/>
    <property type="match status" value="1"/>
</dbReference>
<dbReference type="Gene3D" id="2.130.10.10">
    <property type="entry name" value="YVTN repeat-like/Quinoprotein amine dehydrogenase"/>
    <property type="match status" value="1"/>
</dbReference>
<dbReference type="Gene3D" id="3.30.40.10">
    <property type="entry name" value="Zinc/RING finger domain, C3HC4 (zinc finger)"/>
    <property type="match status" value="1"/>
</dbReference>
<dbReference type="InterPro" id="IPR042755">
    <property type="entry name" value="COP1"/>
</dbReference>
<dbReference type="InterPro" id="IPR015943">
    <property type="entry name" value="WD40/YVTN_repeat-like_dom_sf"/>
</dbReference>
<dbReference type="InterPro" id="IPR019775">
    <property type="entry name" value="WD40_repeat_CS"/>
</dbReference>
<dbReference type="InterPro" id="IPR036322">
    <property type="entry name" value="WD40_repeat_dom_sf"/>
</dbReference>
<dbReference type="InterPro" id="IPR001680">
    <property type="entry name" value="WD40_rpt"/>
</dbReference>
<dbReference type="InterPro" id="IPR001841">
    <property type="entry name" value="Znf_RING"/>
</dbReference>
<dbReference type="InterPro" id="IPR013083">
    <property type="entry name" value="Znf_RING/FYVE/PHD"/>
</dbReference>
<dbReference type="InterPro" id="IPR017907">
    <property type="entry name" value="Znf_RING_CS"/>
</dbReference>
<dbReference type="PANTHER" id="PTHR44080">
    <property type="entry name" value="E3 UBIQUITIN-PROTEIN LIGASE COP1"/>
    <property type="match status" value="1"/>
</dbReference>
<dbReference type="PANTHER" id="PTHR44080:SF1">
    <property type="entry name" value="E3 UBIQUITIN-PROTEIN LIGASE COP1"/>
    <property type="match status" value="1"/>
</dbReference>
<dbReference type="Pfam" id="PF00400">
    <property type="entry name" value="WD40"/>
    <property type="match status" value="5"/>
</dbReference>
<dbReference type="Pfam" id="PF13923">
    <property type="entry name" value="zf-C3HC4_2"/>
    <property type="match status" value="1"/>
</dbReference>
<dbReference type="SMART" id="SM00184">
    <property type="entry name" value="RING"/>
    <property type="match status" value="1"/>
</dbReference>
<dbReference type="SMART" id="SM00320">
    <property type="entry name" value="WD40"/>
    <property type="match status" value="6"/>
</dbReference>
<dbReference type="SUPFAM" id="SSF57850">
    <property type="entry name" value="RING/U-box"/>
    <property type="match status" value="1"/>
</dbReference>
<dbReference type="SUPFAM" id="SSF50978">
    <property type="entry name" value="WD40 repeat-like"/>
    <property type="match status" value="1"/>
</dbReference>
<dbReference type="PROSITE" id="PS00678">
    <property type="entry name" value="WD_REPEATS_1"/>
    <property type="match status" value="1"/>
</dbReference>
<dbReference type="PROSITE" id="PS50082">
    <property type="entry name" value="WD_REPEATS_2"/>
    <property type="match status" value="2"/>
</dbReference>
<dbReference type="PROSITE" id="PS50294">
    <property type="entry name" value="WD_REPEATS_REGION"/>
    <property type="match status" value="1"/>
</dbReference>
<dbReference type="PROSITE" id="PS00518">
    <property type="entry name" value="ZF_RING_1"/>
    <property type="match status" value="1"/>
</dbReference>
<dbReference type="PROSITE" id="PS50089">
    <property type="entry name" value="ZF_RING_2"/>
    <property type="match status" value="1"/>
</dbReference>
<evidence type="ECO:0000250" key="1">
    <source>
        <dbReference type="UniProtKB" id="Q8NHY2"/>
    </source>
</evidence>
<evidence type="ECO:0000255" key="2"/>
<evidence type="ECO:0000255" key="3">
    <source>
        <dbReference type="PROSITE-ProRule" id="PRU00175"/>
    </source>
</evidence>
<evidence type="ECO:0000256" key="4">
    <source>
        <dbReference type="SAM" id="MobiDB-lite"/>
    </source>
</evidence>
<evidence type="ECO:0000269" key="5">
    <source>
    </source>
</evidence>
<evidence type="ECO:0000305" key="6"/>
<evidence type="ECO:0000312" key="7">
    <source>
        <dbReference type="MGI" id="MGI:1347046"/>
    </source>
</evidence>
<comment type="function">
    <text evidence="1">E3 ubiquitin-protein ligase that mediates ubiquitination and subsequent proteasomal degradation of target proteins. E3 ubiquitin ligases accept ubiquitin from an E2 ubiquitin-conjugating enzyme in the form of a thioester and then directly transfers the ubiquitin to targeted substrates. Involved in JUN ubiquitination and degradation. Directly involved in p53 (TP53) ubiquitination and degradation, thereby abolishing p53-dependent transcription and apoptosis. Ubiquitinates p53 independently of MDM2 or RCHY1. Probably mediates E3 ubiquitin ligase activity by functioning as the essential RING domain subunit of larger E3 complexes. In contrast, it does not constitute the catalytic RING subunit in the DCX DET1-COP1 complex that negatively regulates JUN, the ubiquitin ligase activity being mediated by RBX1. Involved in 14-3-3 protein sigma/SFN ubiquitination and proteasomal degradation, leading to AKT activation and promotion of cell survival. Ubiquitinates MTA1 leading to its proteasomal degradation. Upon binding to TRIB1, ubiquitinates CEBPA, which lacks a canonical COP1-binding motif.</text>
</comment>
<comment type="catalytic activity">
    <reaction evidence="1">
        <text>S-ubiquitinyl-[E2 ubiquitin-conjugating enzyme]-L-cysteine + [acceptor protein]-L-lysine = [E2 ubiquitin-conjugating enzyme]-L-cysteine + N(6)-ubiquitinyl-[acceptor protein]-L-lysine.</text>
        <dbReference type="EC" id="2.3.2.27"/>
    </reaction>
</comment>
<comment type="activity regulation">
    <text evidence="1">TRIB1 competes with substrates for RFWD2 binding.</text>
</comment>
<comment type="pathway">
    <text>Protein modification; protein ubiquitination.</text>
</comment>
<comment type="subunit">
    <text evidence="1">Homodimer. Homodimerization is mediated by the coiled coil domain. Component of the DCX DET1-COP1 ubiquitin ligase complex at least composed of RBX1, DET1, DDB1, CUL4A and COP1. Isoform 2 does not interact with CUL4A but still binds to RBX1, suggesting that the interaction may be mediated by another cullin protein. Isoform 1 and isoform 2 interact with CUL5 but not with CUL1, CUL2 not CUL3. Interacts with bZIP transcription factors JUN, JUNB and JUND but not with FOS, ATF2 nor XBP1. Interacts with p53 (TP53). Interacts with COPS6; this interaction stabilizes RFWD2 through reducing its auto-ubiquitination and decelerating its turnover rate. Interacts with SFN; this interaction leads to SFN degradation. Interacts with p53/TP53 and MTA1. Interacts with TRIB1 (via C-terminus) and TRIB2.</text>
</comment>
<comment type="interaction">
    <interactant intactId="EBI-15656898">
        <id>Q9R1A8</id>
    </interactant>
    <interactant intactId="EBI-8018890">
        <id>Q3U182</id>
        <label>Crtc2</label>
    </interactant>
    <organismsDiffer>false</organismsDiffer>
    <experiments>3</experiments>
</comment>
<comment type="subcellular location">
    <subcellularLocation>
        <location evidence="5">Nucleus speckle</location>
    </subcellularLocation>
    <subcellularLocation>
        <location evidence="5">Cytoplasm</location>
    </subcellularLocation>
    <text>In the nucleus, it forms nuclear speckles.</text>
</comment>
<comment type="domain">
    <text evidence="5">The RING finger domain, in addition to its role in ubiquitination, functions as a structural scaffold to bring two clusters of positive-charged residues within spatial proximity to mimic a bipartite nuclear localization signal (NLS).</text>
</comment>
<comment type="domain">
    <text evidence="1">The WD40 domain (386-731) is necessary and sufficient for TRIB1 binding.</text>
</comment>
<comment type="similarity">
    <text evidence="6">Belongs to the COP1 family.</text>
</comment>
<gene>
    <name evidence="7" type="primary">Cop1</name>
    <name evidence="7" type="synonym">Rfwd2</name>
    <name type="synonym">RNF200</name>
</gene>
<reference key="1">
    <citation type="journal article" date="1999" name="Curr. Biol.">
        <title>Evidence for functional conservation of a mammalian homologue of the light-responsive plant protein COP1.</title>
        <authorList>
            <person name="Wang H."/>
            <person name="Kang D."/>
            <person name="Deng X.-W."/>
            <person name="Wei N."/>
        </authorList>
    </citation>
    <scope>NUCLEOTIDE SEQUENCE [MRNA]</scope>
    <scope>SUBCELLULAR LOCATION</scope>
    <scope>TISSUE SPECIFICITY</scope>
    <scope>DOMAIN</scope>
    <scope>MUTAGENESIS OF 113-ARG-LYS-114; 197-LYS--ARG-201; 205-LYS--LYS-208; 244-LEU--LEU-246 AND 358-ARG--LYS-360</scope>
    <source>
        <strain>C57BL/6J</strain>
    </source>
</reference>
<reference key="2">
    <citation type="journal article" date="2004" name="Genome Res.">
        <title>The status, quality, and expansion of the NIH full-length cDNA project: the Mammalian Gene Collection (MGC).</title>
        <authorList>
            <consortium name="The MGC Project Team"/>
        </authorList>
    </citation>
    <scope>NUCLEOTIDE SEQUENCE [LARGE SCALE MRNA]</scope>
    <source>
        <strain>C57BL/6J</strain>
        <tissue>Brain</tissue>
    </source>
</reference>
<proteinExistence type="evidence at protein level"/>
<protein>
    <recommendedName>
        <fullName evidence="6">E3 ubiquitin-protein ligase COP1</fullName>
        <ecNumber evidence="1">2.3.2.27</ecNumber>
    </recommendedName>
    <alternativeName>
        <fullName evidence="6">Constitutive photomorphogenesis protein 1 homolog</fullName>
        <shortName evidence="6">mCOP1</shortName>
    </alternativeName>
    <alternativeName>
        <fullName evidence="6">RING finger and WD repeat domain protein 2</fullName>
    </alternativeName>
    <alternativeName>
        <fullName evidence="6">RING-type E3 ubiquitin transferase RFWD2</fullName>
    </alternativeName>
</protein>
<accession>Q9R1A8</accession>